<accession>Q5X5Q2</accession>
<proteinExistence type="inferred from homology"/>
<protein>
    <recommendedName>
        <fullName evidence="1">Tryptophan synthase beta chain</fullName>
        <ecNumber evidence="1">4.2.1.20</ecNumber>
    </recommendedName>
</protein>
<reference key="1">
    <citation type="journal article" date="2004" name="Nat. Genet.">
        <title>Evidence in the Legionella pneumophila genome for exploitation of host cell functions and high genome plasticity.</title>
        <authorList>
            <person name="Cazalet C."/>
            <person name="Rusniok C."/>
            <person name="Brueggemann H."/>
            <person name="Zidane N."/>
            <person name="Magnier A."/>
            <person name="Ma L."/>
            <person name="Tichit M."/>
            <person name="Jarraud S."/>
            <person name="Bouchier C."/>
            <person name="Vandenesch F."/>
            <person name="Kunst F."/>
            <person name="Etienne J."/>
            <person name="Glaser P."/>
            <person name="Buchrieser C."/>
        </authorList>
    </citation>
    <scope>NUCLEOTIDE SEQUENCE [LARGE SCALE GENOMIC DNA]</scope>
    <source>
        <strain>Paris</strain>
    </source>
</reference>
<evidence type="ECO:0000255" key="1">
    <source>
        <dbReference type="HAMAP-Rule" id="MF_00133"/>
    </source>
</evidence>
<gene>
    <name evidence="1" type="primary">trpB</name>
    <name type="ordered locus">lpp1268</name>
</gene>
<dbReference type="EC" id="4.2.1.20" evidence="1"/>
<dbReference type="EMBL" id="CR628336">
    <property type="protein sequence ID" value="CAH12419.1"/>
    <property type="molecule type" value="Genomic_DNA"/>
</dbReference>
<dbReference type="RefSeq" id="WP_011213615.1">
    <property type="nucleotide sequence ID" value="NC_006368.1"/>
</dbReference>
<dbReference type="SMR" id="Q5X5Q2"/>
<dbReference type="KEGG" id="lpp:lpp1268"/>
<dbReference type="LegioList" id="lpp1268"/>
<dbReference type="HOGENOM" id="CLU_016734_3_1_6"/>
<dbReference type="UniPathway" id="UPA00035">
    <property type="reaction ID" value="UER00044"/>
</dbReference>
<dbReference type="GO" id="GO:0005737">
    <property type="term" value="C:cytoplasm"/>
    <property type="evidence" value="ECO:0007669"/>
    <property type="project" value="TreeGrafter"/>
</dbReference>
<dbReference type="GO" id="GO:0004834">
    <property type="term" value="F:tryptophan synthase activity"/>
    <property type="evidence" value="ECO:0007669"/>
    <property type="project" value="UniProtKB-UniRule"/>
</dbReference>
<dbReference type="CDD" id="cd06446">
    <property type="entry name" value="Trp-synth_B"/>
    <property type="match status" value="1"/>
</dbReference>
<dbReference type="FunFam" id="3.40.50.1100:FF:000001">
    <property type="entry name" value="Tryptophan synthase beta chain"/>
    <property type="match status" value="1"/>
</dbReference>
<dbReference type="FunFam" id="3.40.50.1100:FF:000004">
    <property type="entry name" value="Tryptophan synthase beta chain"/>
    <property type="match status" value="1"/>
</dbReference>
<dbReference type="Gene3D" id="3.40.50.1100">
    <property type="match status" value="2"/>
</dbReference>
<dbReference type="HAMAP" id="MF_00133">
    <property type="entry name" value="Trp_synth_beta"/>
    <property type="match status" value="1"/>
</dbReference>
<dbReference type="InterPro" id="IPR006653">
    <property type="entry name" value="Trp_synth_b_CS"/>
</dbReference>
<dbReference type="InterPro" id="IPR006654">
    <property type="entry name" value="Trp_synth_beta"/>
</dbReference>
<dbReference type="InterPro" id="IPR023026">
    <property type="entry name" value="Trp_synth_beta/beta-like"/>
</dbReference>
<dbReference type="InterPro" id="IPR001926">
    <property type="entry name" value="TrpB-like_PALP"/>
</dbReference>
<dbReference type="InterPro" id="IPR036052">
    <property type="entry name" value="TrpB-like_PALP_sf"/>
</dbReference>
<dbReference type="NCBIfam" id="TIGR00263">
    <property type="entry name" value="trpB"/>
    <property type="match status" value="1"/>
</dbReference>
<dbReference type="PANTHER" id="PTHR48077:SF3">
    <property type="entry name" value="TRYPTOPHAN SYNTHASE"/>
    <property type="match status" value="1"/>
</dbReference>
<dbReference type="PANTHER" id="PTHR48077">
    <property type="entry name" value="TRYPTOPHAN SYNTHASE-RELATED"/>
    <property type="match status" value="1"/>
</dbReference>
<dbReference type="Pfam" id="PF00291">
    <property type="entry name" value="PALP"/>
    <property type="match status" value="1"/>
</dbReference>
<dbReference type="PIRSF" id="PIRSF001413">
    <property type="entry name" value="Trp_syn_beta"/>
    <property type="match status" value="1"/>
</dbReference>
<dbReference type="SUPFAM" id="SSF53686">
    <property type="entry name" value="Tryptophan synthase beta subunit-like PLP-dependent enzymes"/>
    <property type="match status" value="1"/>
</dbReference>
<dbReference type="PROSITE" id="PS00168">
    <property type="entry name" value="TRP_SYNTHASE_BETA"/>
    <property type="match status" value="1"/>
</dbReference>
<sequence>MIKKELPDEFGHFGPYGGMFVADTLVHALKQLEHAYTKYRNDQDFLSELHTELKDYVGRPNPLYHAVHLSKKIGGAQIYLKREDLNHTGAHKINNTIGQALLAKRMGKTRVIAETGAGQHGVATATVAAKFGFQCVVYMGSEDIKRQSSNVYRMKLLGAEVVPVTSGSKTLKDALNEALRDWVSHVDDTFYIIGTVAGPHPYPQMVRDFQAIIGVEARAQHMEKTGRLPDALVACVGGGSNAIGLFYPFLNDQSVMIYGVEAGGKGIETGEHSASLIAGKPGVLHGNRTYLLCDEYGQVKDTHSVSAGLDYPGVGPEHAYLKDTGRVIYKAINDSEALDAFRLLTHTEGIIPALESSHAVAYAIQLAKTMSKEQSIIVNLSGRGDKDMHTVAAIDGITI</sequence>
<organism>
    <name type="scientific">Legionella pneumophila (strain Paris)</name>
    <dbReference type="NCBI Taxonomy" id="297246"/>
    <lineage>
        <taxon>Bacteria</taxon>
        <taxon>Pseudomonadati</taxon>
        <taxon>Pseudomonadota</taxon>
        <taxon>Gammaproteobacteria</taxon>
        <taxon>Legionellales</taxon>
        <taxon>Legionellaceae</taxon>
        <taxon>Legionella</taxon>
    </lineage>
</organism>
<keyword id="KW-0028">Amino-acid biosynthesis</keyword>
<keyword id="KW-0057">Aromatic amino acid biosynthesis</keyword>
<keyword id="KW-0456">Lyase</keyword>
<keyword id="KW-0663">Pyridoxal phosphate</keyword>
<keyword id="KW-0822">Tryptophan biosynthesis</keyword>
<name>TRPB_LEGPA</name>
<feature type="chain" id="PRO_1000076392" description="Tryptophan synthase beta chain">
    <location>
        <begin position="1"/>
        <end position="399"/>
    </location>
</feature>
<feature type="modified residue" description="N6-(pyridoxal phosphate)lysine" evidence="1">
    <location>
        <position position="92"/>
    </location>
</feature>
<comment type="function">
    <text evidence="1">The beta subunit is responsible for the synthesis of L-tryptophan from indole and L-serine.</text>
</comment>
<comment type="catalytic activity">
    <reaction evidence="1">
        <text>(1S,2R)-1-C-(indol-3-yl)glycerol 3-phosphate + L-serine = D-glyceraldehyde 3-phosphate + L-tryptophan + H2O</text>
        <dbReference type="Rhea" id="RHEA:10532"/>
        <dbReference type="ChEBI" id="CHEBI:15377"/>
        <dbReference type="ChEBI" id="CHEBI:33384"/>
        <dbReference type="ChEBI" id="CHEBI:57912"/>
        <dbReference type="ChEBI" id="CHEBI:58866"/>
        <dbReference type="ChEBI" id="CHEBI:59776"/>
        <dbReference type="EC" id="4.2.1.20"/>
    </reaction>
</comment>
<comment type="cofactor">
    <cofactor evidence="1">
        <name>pyridoxal 5'-phosphate</name>
        <dbReference type="ChEBI" id="CHEBI:597326"/>
    </cofactor>
</comment>
<comment type="pathway">
    <text evidence="1">Amino-acid biosynthesis; L-tryptophan biosynthesis; L-tryptophan from chorismate: step 5/5.</text>
</comment>
<comment type="subunit">
    <text evidence="1">Tetramer of two alpha and two beta chains.</text>
</comment>
<comment type="similarity">
    <text evidence="1">Belongs to the TrpB family.</text>
</comment>